<keyword id="KW-0067">ATP-binding</keyword>
<keyword id="KW-0342">GTP-binding</keyword>
<keyword id="KW-0547">Nucleotide-binding</keyword>
<keyword id="KW-1185">Reference proteome</keyword>
<keyword id="KW-0694">RNA-binding</keyword>
<evidence type="ECO:0000255" key="1">
    <source>
        <dbReference type="HAMAP-Rule" id="MF_00636"/>
    </source>
</evidence>
<comment type="function">
    <text evidence="1">Modulates the synthesis of GlmS, by affecting the processing and stability of the regulatory small RNA GlmZ. When glucosamine-6-phosphate (GlcN6P) concentrations are high in the cell, RapZ binds GlmZ and targets it to cleavage by RNase E. Consequently, GlmZ is inactivated and unable to activate GlmS synthesis. Under low GlcN6P concentrations, RapZ is sequestered and inactivated by an other regulatory small RNA, GlmY, preventing GlmZ degradation and leading to synthesis of GlmS.</text>
</comment>
<comment type="subunit">
    <text evidence="1">Homotrimer.</text>
</comment>
<comment type="similarity">
    <text evidence="1">Belongs to the RapZ-like family. RapZ subfamily.</text>
</comment>
<gene>
    <name evidence="1" type="primary">rapZ</name>
    <name type="ordered locus">c3965</name>
</gene>
<name>RAPZ_ECOL6</name>
<dbReference type="EMBL" id="AE014075">
    <property type="protein sequence ID" value="AAN82405.1"/>
    <property type="molecule type" value="Genomic_DNA"/>
</dbReference>
<dbReference type="RefSeq" id="WP_000243741.1">
    <property type="nucleotide sequence ID" value="NZ_CP051263.1"/>
</dbReference>
<dbReference type="SMR" id="P0A895"/>
<dbReference type="STRING" id="199310.c3965"/>
<dbReference type="GeneID" id="93778776"/>
<dbReference type="KEGG" id="ecc:c3965"/>
<dbReference type="eggNOG" id="COG1660">
    <property type="taxonomic scope" value="Bacteria"/>
</dbReference>
<dbReference type="HOGENOM" id="CLU_059558_1_1_6"/>
<dbReference type="BioCyc" id="ECOL199310:C3965-MONOMER"/>
<dbReference type="Proteomes" id="UP000001410">
    <property type="component" value="Chromosome"/>
</dbReference>
<dbReference type="GO" id="GO:0005524">
    <property type="term" value="F:ATP binding"/>
    <property type="evidence" value="ECO:0007669"/>
    <property type="project" value="UniProtKB-UniRule"/>
</dbReference>
<dbReference type="GO" id="GO:0005525">
    <property type="term" value="F:GTP binding"/>
    <property type="evidence" value="ECO:0007669"/>
    <property type="project" value="UniProtKB-UniRule"/>
</dbReference>
<dbReference type="GO" id="GO:0003723">
    <property type="term" value="F:RNA binding"/>
    <property type="evidence" value="ECO:0007669"/>
    <property type="project" value="UniProtKB-KW"/>
</dbReference>
<dbReference type="Gene3D" id="3.40.50.300">
    <property type="entry name" value="P-loop containing nucleotide triphosphate hydrolases"/>
    <property type="match status" value="1"/>
</dbReference>
<dbReference type="HAMAP" id="MF_00636">
    <property type="entry name" value="RapZ_like"/>
    <property type="match status" value="1"/>
</dbReference>
<dbReference type="InterPro" id="IPR027417">
    <property type="entry name" value="P-loop_NTPase"/>
</dbReference>
<dbReference type="InterPro" id="IPR005337">
    <property type="entry name" value="RapZ-like"/>
</dbReference>
<dbReference type="InterPro" id="IPR053930">
    <property type="entry name" value="RapZ-like_N"/>
</dbReference>
<dbReference type="InterPro" id="IPR053931">
    <property type="entry name" value="RapZ_C"/>
</dbReference>
<dbReference type="NCBIfam" id="NF003828">
    <property type="entry name" value="PRK05416.1"/>
    <property type="match status" value="1"/>
</dbReference>
<dbReference type="PANTHER" id="PTHR30448">
    <property type="entry name" value="RNASE ADAPTER PROTEIN RAPZ"/>
    <property type="match status" value="1"/>
</dbReference>
<dbReference type="PANTHER" id="PTHR30448:SF0">
    <property type="entry name" value="RNASE ADAPTER PROTEIN RAPZ"/>
    <property type="match status" value="1"/>
</dbReference>
<dbReference type="Pfam" id="PF22740">
    <property type="entry name" value="PapZ_C"/>
    <property type="match status" value="1"/>
</dbReference>
<dbReference type="Pfam" id="PF03668">
    <property type="entry name" value="RapZ-like_N"/>
    <property type="match status" value="1"/>
</dbReference>
<dbReference type="PIRSF" id="PIRSF005052">
    <property type="entry name" value="P-loopkin"/>
    <property type="match status" value="1"/>
</dbReference>
<dbReference type="SUPFAM" id="SSF52540">
    <property type="entry name" value="P-loop containing nucleoside triphosphate hydrolases"/>
    <property type="match status" value="1"/>
</dbReference>
<feature type="chain" id="PRO_0000107707" description="RNase adapter protein RapZ">
    <location>
        <begin position="1"/>
        <end position="284"/>
    </location>
</feature>
<feature type="region of interest" description="RNA-binding" evidence="1">
    <location>
        <begin position="266"/>
        <end position="284"/>
    </location>
</feature>
<feature type="binding site" evidence="1">
    <location>
        <begin position="8"/>
        <end position="15"/>
    </location>
    <ligand>
        <name>ATP</name>
        <dbReference type="ChEBI" id="CHEBI:30616"/>
    </ligand>
</feature>
<feature type="binding site" evidence="1">
    <location>
        <begin position="56"/>
        <end position="59"/>
    </location>
    <ligand>
        <name>GTP</name>
        <dbReference type="ChEBI" id="CHEBI:37565"/>
    </ligand>
</feature>
<reference key="1">
    <citation type="journal article" date="2002" name="Proc. Natl. Acad. Sci. U.S.A.">
        <title>Extensive mosaic structure revealed by the complete genome sequence of uropathogenic Escherichia coli.</title>
        <authorList>
            <person name="Welch R.A."/>
            <person name="Burland V."/>
            <person name="Plunkett G. III"/>
            <person name="Redford P."/>
            <person name="Roesch P."/>
            <person name="Rasko D."/>
            <person name="Buckles E.L."/>
            <person name="Liou S.-R."/>
            <person name="Boutin A."/>
            <person name="Hackett J."/>
            <person name="Stroud D."/>
            <person name="Mayhew G.F."/>
            <person name="Rose D.J."/>
            <person name="Zhou S."/>
            <person name="Schwartz D.C."/>
            <person name="Perna N.T."/>
            <person name="Mobley H.L.T."/>
            <person name="Donnenberg M.S."/>
            <person name="Blattner F.R."/>
        </authorList>
    </citation>
    <scope>NUCLEOTIDE SEQUENCE [LARGE SCALE GENOMIC DNA]</scope>
    <source>
        <strain>CFT073 / ATCC 700928 / UPEC</strain>
    </source>
</reference>
<sequence length="284" mass="32492">MVLMIVSGRSGSGKSVALRALEDMGFYCVDNLPVVLLPDLARTLADREISAAVSIDVRNMPESPEIFEQAMSNLPDAFSPQLLFLDADRNTLIRRYSDTRRLHPLSSKNLSLESAIDKESDLLEPLRSRADLIVDTSEMSVHELAEMLRTRLLGKRERELTMVFESFGFKHGIPIDADYVFDVRFLPNPHWDPKLRPMTGLDKPVAAFLDRHTEVHNFIYQTRSYLELWLPMLETNNRSYLTVAIGCTGGKHRSVYIAEQLADYFRSRGKNVQSRHRTLEKRKP</sequence>
<protein>
    <recommendedName>
        <fullName evidence="1">RNase adapter protein RapZ</fullName>
    </recommendedName>
</protein>
<proteinExistence type="inferred from homology"/>
<accession>P0A895</accession>
<accession>P33995</accession>
<organism>
    <name type="scientific">Escherichia coli O6:H1 (strain CFT073 / ATCC 700928 / UPEC)</name>
    <dbReference type="NCBI Taxonomy" id="199310"/>
    <lineage>
        <taxon>Bacteria</taxon>
        <taxon>Pseudomonadati</taxon>
        <taxon>Pseudomonadota</taxon>
        <taxon>Gammaproteobacteria</taxon>
        <taxon>Enterobacterales</taxon>
        <taxon>Enterobacteriaceae</taxon>
        <taxon>Escherichia</taxon>
    </lineage>
</organism>